<dbReference type="EC" id="2.7.11.22"/>
<dbReference type="EC" id="2.7.11.23"/>
<dbReference type="EMBL" id="AC113316">
    <property type="status" value="NOT_ANNOTATED_CDS"/>
    <property type="molecule type" value="Genomic_DNA"/>
</dbReference>
<dbReference type="EMBL" id="BC025046">
    <property type="status" value="NOT_ANNOTATED_CDS"/>
    <property type="molecule type" value="mRNA"/>
</dbReference>
<dbReference type="EMBL" id="BC132551">
    <property type="protein sequence ID" value="AAI32552.1"/>
    <property type="molecule type" value="mRNA"/>
</dbReference>
<dbReference type="EMBL" id="BC132553">
    <property type="protein sequence ID" value="AAI32554.1"/>
    <property type="molecule type" value="mRNA"/>
</dbReference>
<dbReference type="EMBL" id="AK131948">
    <property type="status" value="NOT_ANNOTATED_CDS"/>
    <property type="molecule type" value="mRNA"/>
</dbReference>
<dbReference type="CCDS" id="CCDS19869.1">
    <molecule id="Q8R3L8-1"/>
</dbReference>
<dbReference type="RefSeq" id="NP_705827.2">
    <molecule id="Q8R3L8-1"/>
    <property type="nucleotide sequence ID" value="NM_153599.3"/>
</dbReference>
<dbReference type="RefSeq" id="XP_006504899.1">
    <molecule id="Q8R3L8-3"/>
    <property type="nucleotide sequence ID" value="XM_006504836.5"/>
</dbReference>
<dbReference type="SMR" id="Q8R3L8"/>
<dbReference type="BioGRID" id="234457">
    <property type="interactions" value="4"/>
</dbReference>
<dbReference type="ComplexPortal" id="CPX-3266">
    <property type="entry name" value="CKM complex variant 1"/>
</dbReference>
<dbReference type="DIP" id="DIP-59235N"/>
<dbReference type="FunCoup" id="Q8R3L8">
    <property type="interactions" value="3984"/>
</dbReference>
<dbReference type="IntAct" id="Q8R3L8">
    <property type="interactions" value="7"/>
</dbReference>
<dbReference type="STRING" id="10090.ENSMUSP00000031640"/>
<dbReference type="BindingDB" id="Q8R3L8"/>
<dbReference type="ChEMBL" id="CHEMBL5169178"/>
<dbReference type="GlyGen" id="Q8R3L8">
    <property type="glycosylation" value="3 sites, 1 O-linked glycan (3 sites)"/>
</dbReference>
<dbReference type="iPTMnet" id="Q8R3L8"/>
<dbReference type="PhosphoSitePlus" id="Q8R3L8"/>
<dbReference type="PaxDb" id="10090-ENSMUSP00000031640"/>
<dbReference type="ProteomicsDB" id="281352">
    <molecule id="Q8R3L8-1"/>
</dbReference>
<dbReference type="ProteomicsDB" id="281353">
    <molecule id="Q8R3L8-2"/>
</dbReference>
<dbReference type="ProteomicsDB" id="281354">
    <molecule id="Q8R3L8-3"/>
</dbReference>
<dbReference type="Pumba" id="Q8R3L8"/>
<dbReference type="Antibodypedia" id="7248">
    <property type="antibodies" value="453 antibodies from 37 providers"/>
</dbReference>
<dbReference type="DNASU" id="264064"/>
<dbReference type="Ensembl" id="ENSMUST00000031640.15">
    <molecule id="Q8R3L8-1"/>
    <property type="protein sequence ID" value="ENSMUSP00000031640.9"/>
    <property type="gene ID" value="ENSMUSG00000029635.16"/>
</dbReference>
<dbReference type="GeneID" id="264064"/>
<dbReference type="KEGG" id="mmu:264064"/>
<dbReference type="UCSC" id="uc009and.1">
    <molecule id="Q8R3L8-1"/>
    <property type="organism name" value="mouse"/>
</dbReference>
<dbReference type="UCSC" id="uc009ane.1">
    <molecule id="Q8R3L8-2"/>
    <property type="organism name" value="mouse"/>
</dbReference>
<dbReference type="AGR" id="MGI:1196224"/>
<dbReference type="CTD" id="1024"/>
<dbReference type="MGI" id="MGI:1196224">
    <property type="gene designation" value="Cdk8"/>
</dbReference>
<dbReference type="VEuPathDB" id="HostDB:ENSMUSG00000029635"/>
<dbReference type="eggNOG" id="KOG0666">
    <property type="taxonomic scope" value="Eukaryota"/>
</dbReference>
<dbReference type="GeneTree" id="ENSGT00940000157104"/>
<dbReference type="HOGENOM" id="CLU_000288_181_6_1"/>
<dbReference type="InParanoid" id="Q8R3L8"/>
<dbReference type="OMA" id="YFKNGGP"/>
<dbReference type="OrthoDB" id="6284126at2759"/>
<dbReference type="PhylomeDB" id="Q8R3L8"/>
<dbReference type="TreeFam" id="TF101025"/>
<dbReference type="Reactome" id="R-MMU-2173796">
    <property type="pathway name" value="SMAD2/SMAD3:SMAD4 heterotrimer regulates transcription"/>
</dbReference>
<dbReference type="BioGRID-ORCS" id="264064">
    <property type="hits" value="3 hits in 81 CRISPR screens"/>
</dbReference>
<dbReference type="ChiTaRS" id="Cdk8">
    <property type="organism name" value="mouse"/>
</dbReference>
<dbReference type="PRO" id="PR:Q8R3L8"/>
<dbReference type="Proteomes" id="UP000000589">
    <property type="component" value="Chromosome 5"/>
</dbReference>
<dbReference type="RNAct" id="Q8R3L8">
    <property type="molecule type" value="protein"/>
</dbReference>
<dbReference type="Bgee" id="ENSMUSG00000029635">
    <property type="expression patterns" value="Expressed in metanephric proximal tubule and 258 other cell types or tissues"/>
</dbReference>
<dbReference type="ExpressionAtlas" id="Q8R3L8">
    <property type="expression patterns" value="baseline and differential"/>
</dbReference>
<dbReference type="GO" id="GO:1990508">
    <property type="term" value="C:CKM complex"/>
    <property type="evidence" value="ECO:0007669"/>
    <property type="project" value="Ensembl"/>
</dbReference>
<dbReference type="GO" id="GO:0016592">
    <property type="term" value="C:mediator complex"/>
    <property type="evidence" value="ECO:0000314"/>
    <property type="project" value="MGI"/>
</dbReference>
<dbReference type="GO" id="GO:0005730">
    <property type="term" value="C:nucleolus"/>
    <property type="evidence" value="ECO:0000266"/>
    <property type="project" value="MGI"/>
</dbReference>
<dbReference type="GO" id="GO:0005654">
    <property type="term" value="C:nucleoplasm"/>
    <property type="evidence" value="ECO:0000304"/>
    <property type="project" value="Reactome"/>
</dbReference>
<dbReference type="GO" id="GO:0005634">
    <property type="term" value="C:nucleus"/>
    <property type="evidence" value="ECO:0000266"/>
    <property type="project" value="MGI"/>
</dbReference>
<dbReference type="GO" id="GO:0032991">
    <property type="term" value="C:protein-containing complex"/>
    <property type="evidence" value="ECO:0000266"/>
    <property type="project" value="MGI"/>
</dbReference>
<dbReference type="GO" id="GO:0000151">
    <property type="term" value="C:ubiquitin ligase complex"/>
    <property type="evidence" value="ECO:0007669"/>
    <property type="project" value="Ensembl"/>
</dbReference>
<dbReference type="GO" id="GO:0005524">
    <property type="term" value="F:ATP binding"/>
    <property type="evidence" value="ECO:0007669"/>
    <property type="project" value="UniProtKB-KW"/>
</dbReference>
<dbReference type="GO" id="GO:0004693">
    <property type="term" value="F:cyclin-dependent protein serine/threonine kinase activity"/>
    <property type="evidence" value="ECO:0007669"/>
    <property type="project" value="UniProtKB-EC"/>
</dbReference>
<dbReference type="GO" id="GO:0004672">
    <property type="term" value="F:protein kinase activity"/>
    <property type="evidence" value="ECO:0000250"/>
    <property type="project" value="UniProtKB"/>
</dbReference>
<dbReference type="GO" id="GO:0106310">
    <property type="term" value="F:protein serine kinase activity"/>
    <property type="evidence" value="ECO:0007669"/>
    <property type="project" value="RHEA"/>
</dbReference>
<dbReference type="GO" id="GO:0008353">
    <property type="term" value="F:RNA polymerase II CTD heptapeptide repeat kinase activity"/>
    <property type="evidence" value="ECO:0007669"/>
    <property type="project" value="UniProtKB-EC"/>
</dbReference>
<dbReference type="GO" id="GO:0061630">
    <property type="term" value="F:ubiquitin protein ligase activity"/>
    <property type="evidence" value="ECO:0007669"/>
    <property type="project" value="Ensembl"/>
</dbReference>
<dbReference type="GO" id="GO:0090209">
    <property type="term" value="P:negative regulation of triglyceride metabolic process"/>
    <property type="evidence" value="ECO:0007669"/>
    <property type="project" value="Ensembl"/>
</dbReference>
<dbReference type="GO" id="GO:0045944">
    <property type="term" value="P:positive regulation of transcription by RNA polymerase II"/>
    <property type="evidence" value="ECO:0007669"/>
    <property type="project" value="Ensembl"/>
</dbReference>
<dbReference type="GO" id="GO:0016567">
    <property type="term" value="P:protein ubiquitination"/>
    <property type="evidence" value="ECO:0007669"/>
    <property type="project" value="Ensembl"/>
</dbReference>
<dbReference type="CDD" id="cd07868">
    <property type="entry name" value="STKc_CDK8"/>
    <property type="match status" value="1"/>
</dbReference>
<dbReference type="FunFam" id="1.10.510.10:FF:000088">
    <property type="entry name" value="cyclin-dependent kinase 8 isoform X1"/>
    <property type="match status" value="1"/>
</dbReference>
<dbReference type="FunFam" id="3.30.200.20:FF:000122">
    <property type="entry name" value="cyclin-dependent kinase 8 isoform X1"/>
    <property type="match status" value="1"/>
</dbReference>
<dbReference type="Gene3D" id="3.30.200.20">
    <property type="entry name" value="Phosphorylase Kinase, domain 1"/>
    <property type="match status" value="1"/>
</dbReference>
<dbReference type="Gene3D" id="1.10.510.10">
    <property type="entry name" value="Transferase(Phosphotransferase) domain 1"/>
    <property type="match status" value="1"/>
</dbReference>
<dbReference type="InterPro" id="IPR050108">
    <property type="entry name" value="CDK"/>
</dbReference>
<dbReference type="InterPro" id="IPR011009">
    <property type="entry name" value="Kinase-like_dom_sf"/>
</dbReference>
<dbReference type="InterPro" id="IPR000719">
    <property type="entry name" value="Prot_kinase_dom"/>
</dbReference>
<dbReference type="InterPro" id="IPR017441">
    <property type="entry name" value="Protein_kinase_ATP_BS"/>
</dbReference>
<dbReference type="InterPro" id="IPR008271">
    <property type="entry name" value="Ser/Thr_kinase_AS"/>
</dbReference>
<dbReference type="PANTHER" id="PTHR24056">
    <property type="entry name" value="CELL DIVISION PROTEIN KINASE"/>
    <property type="match status" value="1"/>
</dbReference>
<dbReference type="PANTHER" id="PTHR24056:SF243">
    <property type="entry name" value="CYCLIN-DEPENDENT KINASE 8"/>
    <property type="match status" value="1"/>
</dbReference>
<dbReference type="Pfam" id="PF00069">
    <property type="entry name" value="Pkinase"/>
    <property type="match status" value="1"/>
</dbReference>
<dbReference type="SMART" id="SM00220">
    <property type="entry name" value="S_TKc"/>
    <property type="match status" value="1"/>
</dbReference>
<dbReference type="SUPFAM" id="SSF56112">
    <property type="entry name" value="Protein kinase-like (PK-like)"/>
    <property type="match status" value="1"/>
</dbReference>
<dbReference type="PROSITE" id="PS00107">
    <property type="entry name" value="PROTEIN_KINASE_ATP"/>
    <property type="match status" value="1"/>
</dbReference>
<dbReference type="PROSITE" id="PS50011">
    <property type="entry name" value="PROTEIN_KINASE_DOM"/>
    <property type="match status" value="1"/>
</dbReference>
<dbReference type="PROSITE" id="PS00108">
    <property type="entry name" value="PROTEIN_KINASE_ST"/>
    <property type="match status" value="1"/>
</dbReference>
<feature type="chain" id="PRO_0000280443" description="Cyclin-dependent kinase 8">
    <location>
        <begin position="1"/>
        <end position="464"/>
    </location>
</feature>
<feature type="domain" description="Protein kinase" evidence="3">
    <location>
        <begin position="21"/>
        <end position="335"/>
    </location>
</feature>
<feature type="region of interest" description="Interaction with CCNC" evidence="1">
    <location>
        <begin position="1"/>
        <end position="15"/>
    </location>
</feature>
<feature type="region of interest" description="Disordered" evidence="5">
    <location>
        <begin position="358"/>
        <end position="464"/>
    </location>
</feature>
<feature type="compositionally biased region" description="Low complexity" evidence="5">
    <location>
        <begin position="373"/>
        <end position="391"/>
    </location>
</feature>
<feature type="compositionally biased region" description="Polar residues" evidence="5">
    <location>
        <begin position="409"/>
        <end position="426"/>
    </location>
</feature>
<feature type="compositionally biased region" description="Polar residues" evidence="5">
    <location>
        <begin position="436"/>
        <end position="464"/>
    </location>
</feature>
<feature type="active site" description="Proton acceptor" evidence="3 4">
    <location>
        <position position="151"/>
    </location>
</feature>
<feature type="binding site" evidence="3">
    <location>
        <begin position="27"/>
        <end position="35"/>
    </location>
    <ligand>
        <name>ATP</name>
        <dbReference type="ChEBI" id="CHEBI:30616"/>
    </ligand>
</feature>
<feature type="binding site" evidence="3">
    <location>
        <position position="52"/>
    </location>
    <ligand>
        <name>ATP</name>
        <dbReference type="ChEBI" id="CHEBI:30616"/>
    </ligand>
</feature>
<feature type="splice variant" id="VSP_023673" description="In isoform 2." evidence="6">
    <location>
        <begin position="1"/>
        <end position="259"/>
    </location>
</feature>
<feature type="splice variant" id="VSP_023675" description="In isoform 3." evidence="7">
    <location>
        <begin position="216"/>
        <end position="220"/>
    </location>
</feature>
<feature type="splice variant" id="VSP_023674" description="In isoform 2." evidence="6">
    <original>GFPA</original>
    <variation>MYFT</variation>
    <location>
        <begin position="260"/>
        <end position="263"/>
    </location>
</feature>
<reference key="1">
    <citation type="journal article" date="2009" name="PLoS Biol.">
        <title>Lineage-specific biology revealed by a finished genome assembly of the mouse.</title>
        <authorList>
            <person name="Church D.M."/>
            <person name="Goodstadt L."/>
            <person name="Hillier L.W."/>
            <person name="Zody M.C."/>
            <person name="Goldstein S."/>
            <person name="She X."/>
            <person name="Bult C.J."/>
            <person name="Agarwala R."/>
            <person name="Cherry J.L."/>
            <person name="DiCuccio M."/>
            <person name="Hlavina W."/>
            <person name="Kapustin Y."/>
            <person name="Meric P."/>
            <person name="Maglott D."/>
            <person name="Birtle Z."/>
            <person name="Marques A.C."/>
            <person name="Graves T."/>
            <person name="Zhou S."/>
            <person name="Teague B."/>
            <person name="Potamousis K."/>
            <person name="Churas C."/>
            <person name="Place M."/>
            <person name="Herschleb J."/>
            <person name="Runnheim R."/>
            <person name="Forrest D."/>
            <person name="Amos-Landgraf J."/>
            <person name="Schwartz D.C."/>
            <person name="Cheng Z."/>
            <person name="Lindblad-Toh K."/>
            <person name="Eichler E.E."/>
            <person name="Ponting C.P."/>
        </authorList>
    </citation>
    <scope>NUCLEOTIDE SEQUENCE [LARGE SCALE GENOMIC DNA]</scope>
    <source>
        <strain>C57BL/6J</strain>
    </source>
</reference>
<reference key="2">
    <citation type="journal article" date="2004" name="Genome Res.">
        <title>The status, quality, and expansion of the NIH full-length cDNA project: the Mammalian Gene Collection (MGC).</title>
        <authorList>
            <consortium name="The MGC Project Team"/>
        </authorList>
    </citation>
    <scope>NUCLEOTIDE SEQUENCE [LARGE SCALE MRNA] (ISOFORM 2)</scope>
    <source>
        <strain>FVB/N</strain>
        <tissue>Brain</tissue>
        <tissue>Mammary tumor</tissue>
    </source>
</reference>
<reference key="3">
    <citation type="journal article" date="2005" name="Science">
        <title>The transcriptional landscape of the mammalian genome.</title>
        <authorList>
            <person name="Carninci P."/>
            <person name="Kasukawa T."/>
            <person name="Katayama S."/>
            <person name="Gough J."/>
            <person name="Frith M.C."/>
            <person name="Maeda N."/>
            <person name="Oyama R."/>
            <person name="Ravasi T."/>
            <person name="Lenhard B."/>
            <person name="Wells C."/>
            <person name="Kodzius R."/>
            <person name="Shimokawa K."/>
            <person name="Bajic V.B."/>
            <person name="Brenner S.E."/>
            <person name="Batalov S."/>
            <person name="Forrest A.R."/>
            <person name="Zavolan M."/>
            <person name="Davis M.J."/>
            <person name="Wilming L.G."/>
            <person name="Aidinis V."/>
            <person name="Allen J.E."/>
            <person name="Ambesi-Impiombato A."/>
            <person name="Apweiler R."/>
            <person name="Aturaliya R.N."/>
            <person name="Bailey T.L."/>
            <person name="Bansal M."/>
            <person name="Baxter L."/>
            <person name="Beisel K.W."/>
            <person name="Bersano T."/>
            <person name="Bono H."/>
            <person name="Chalk A.M."/>
            <person name="Chiu K.P."/>
            <person name="Choudhary V."/>
            <person name="Christoffels A."/>
            <person name="Clutterbuck D.R."/>
            <person name="Crowe M.L."/>
            <person name="Dalla E."/>
            <person name="Dalrymple B.P."/>
            <person name="de Bono B."/>
            <person name="Della Gatta G."/>
            <person name="di Bernardo D."/>
            <person name="Down T."/>
            <person name="Engstrom P."/>
            <person name="Fagiolini M."/>
            <person name="Faulkner G."/>
            <person name="Fletcher C.F."/>
            <person name="Fukushima T."/>
            <person name="Furuno M."/>
            <person name="Futaki S."/>
            <person name="Gariboldi M."/>
            <person name="Georgii-Hemming P."/>
            <person name="Gingeras T.R."/>
            <person name="Gojobori T."/>
            <person name="Green R.E."/>
            <person name="Gustincich S."/>
            <person name="Harbers M."/>
            <person name="Hayashi Y."/>
            <person name="Hensch T.K."/>
            <person name="Hirokawa N."/>
            <person name="Hill D."/>
            <person name="Huminiecki L."/>
            <person name="Iacono M."/>
            <person name="Ikeo K."/>
            <person name="Iwama A."/>
            <person name="Ishikawa T."/>
            <person name="Jakt M."/>
            <person name="Kanapin A."/>
            <person name="Katoh M."/>
            <person name="Kawasawa Y."/>
            <person name="Kelso J."/>
            <person name="Kitamura H."/>
            <person name="Kitano H."/>
            <person name="Kollias G."/>
            <person name="Krishnan S.P."/>
            <person name="Kruger A."/>
            <person name="Kummerfeld S.K."/>
            <person name="Kurochkin I.V."/>
            <person name="Lareau L.F."/>
            <person name="Lazarevic D."/>
            <person name="Lipovich L."/>
            <person name="Liu J."/>
            <person name="Liuni S."/>
            <person name="McWilliam S."/>
            <person name="Madan Babu M."/>
            <person name="Madera M."/>
            <person name="Marchionni L."/>
            <person name="Matsuda H."/>
            <person name="Matsuzawa S."/>
            <person name="Miki H."/>
            <person name="Mignone F."/>
            <person name="Miyake S."/>
            <person name="Morris K."/>
            <person name="Mottagui-Tabar S."/>
            <person name="Mulder N."/>
            <person name="Nakano N."/>
            <person name="Nakauchi H."/>
            <person name="Ng P."/>
            <person name="Nilsson R."/>
            <person name="Nishiguchi S."/>
            <person name="Nishikawa S."/>
            <person name="Nori F."/>
            <person name="Ohara O."/>
            <person name="Okazaki Y."/>
            <person name="Orlando V."/>
            <person name="Pang K.C."/>
            <person name="Pavan W.J."/>
            <person name="Pavesi G."/>
            <person name="Pesole G."/>
            <person name="Petrovsky N."/>
            <person name="Piazza S."/>
            <person name="Reed J."/>
            <person name="Reid J.F."/>
            <person name="Ring B.Z."/>
            <person name="Ringwald M."/>
            <person name="Rost B."/>
            <person name="Ruan Y."/>
            <person name="Salzberg S.L."/>
            <person name="Sandelin A."/>
            <person name="Schneider C."/>
            <person name="Schoenbach C."/>
            <person name="Sekiguchi K."/>
            <person name="Semple C.A."/>
            <person name="Seno S."/>
            <person name="Sessa L."/>
            <person name="Sheng Y."/>
            <person name="Shibata Y."/>
            <person name="Shimada H."/>
            <person name="Shimada K."/>
            <person name="Silva D."/>
            <person name="Sinclair B."/>
            <person name="Sperling S."/>
            <person name="Stupka E."/>
            <person name="Sugiura K."/>
            <person name="Sultana R."/>
            <person name="Takenaka Y."/>
            <person name="Taki K."/>
            <person name="Tammoja K."/>
            <person name="Tan S.L."/>
            <person name="Tang S."/>
            <person name="Taylor M.S."/>
            <person name="Tegner J."/>
            <person name="Teichmann S.A."/>
            <person name="Ueda H.R."/>
            <person name="van Nimwegen E."/>
            <person name="Verardo R."/>
            <person name="Wei C.L."/>
            <person name="Yagi K."/>
            <person name="Yamanishi H."/>
            <person name="Zabarovsky E."/>
            <person name="Zhu S."/>
            <person name="Zimmer A."/>
            <person name="Hide W."/>
            <person name="Bult C."/>
            <person name="Grimmond S.M."/>
            <person name="Teasdale R.D."/>
            <person name="Liu E.T."/>
            <person name="Brusic V."/>
            <person name="Quackenbush J."/>
            <person name="Wahlestedt C."/>
            <person name="Mattick J.S."/>
            <person name="Hume D.A."/>
            <person name="Kai C."/>
            <person name="Sasaki D."/>
            <person name="Tomaru Y."/>
            <person name="Fukuda S."/>
            <person name="Kanamori-Katayama M."/>
            <person name="Suzuki M."/>
            <person name="Aoki J."/>
            <person name="Arakawa T."/>
            <person name="Iida J."/>
            <person name="Imamura K."/>
            <person name="Itoh M."/>
            <person name="Kato T."/>
            <person name="Kawaji H."/>
            <person name="Kawagashira N."/>
            <person name="Kawashima T."/>
            <person name="Kojima M."/>
            <person name="Kondo S."/>
            <person name="Konno H."/>
            <person name="Nakano K."/>
            <person name="Ninomiya N."/>
            <person name="Nishio T."/>
            <person name="Okada M."/>
            <person name="Plessy C."/>
            <person name="Shibata K."/>
            <person name="Shiraki T."/>
            <person name="Suzuki S."/>
            <person name="Tagami M."/>
            <person name="Waki K."/>
            <person name="Watahiki A."/>
            <person name="Okamura-Oho Y."/>
            <person name="Suzuki H."/>
            <person name="Kawai J."/>
            <person name="Hayashizaki Y."/>
        </authorList>
    </citation>
    <scope>NUCLEOTIDE SEQUENCE [LARGE SCALE MRNA] OF 44-464 (ISOFORM 3)</scope>
</reference>
<gene>
    <name type="primary">Cdk8</name>
</gene>
<protein>
    <recommendedName>
        <fullName>Cyclin-dependent kinase 8</fullName>
        <ecNumber>2.7.11.22</ecNumber>
        <ecNumber>2.7.11.23</ecNumber>
    </recommendedName>
    <alternativeName>
        <fullName>Cell division protein kinase 8</fullName>
    </alternativeName>
    <alternativeName>
        <fullName>Mediator complex subunit CDK8</fullName>
    </alternativeName>
    <alternativeName>
        <fullName>Mediator of RNA polymerase II transcription subunit CDK8</fullName>
    </alternativeName>
</protein>
<accession>Q8R3L8</accession>
<organism>
    <name type="scientific">Mus musculus</name>
    <name type="common">Mouse</name>
    <dbReference type="NCBI Taxonomy" id="10090"/>
    <lineage>
        <taxon>Eukaryota</taxon>
        <taxon>Metazoa</taxon>
        <taxon>Chordata</taxon>
        <taxon>Craniata</taxon>
        <taxon>Vertebrata</taxon>
        <taxon>Euteleostomi</taxon>
        <taxon>Mammalia</taxon>
        <taxon>Eutheria</taxon>
        <taxon>Euarchontoglires</taxon>
        <taxon>Glires</taxon>
        <taxon>Rodentia</taxon>
        <taxon>Myomorpha</taxon>
        <taxon>Muroidea</taxon>
        <taxon>Muridae</taxon>
        <taxon>Murinae</taxon>
        <taxon>Mus</taxon>
        <taxon>Mus</taxon>
    </lineage>
</organism>
<keyword id="KW-0010">Activator</keyword>
<keyword id="KW-0025">Alternative splicing</keyword>
<keyword id="KW-0067">ATP-binding</keyword>
<keyword id="KW-0418">Kinase</keyword>
<keyword id="KW-0547">Nucleotide-binding</keyword>
<keyword id="KW-0539">Nucleus</keyword>
<keyword id="KW-1185">Reference proteome</keyword>
<keyword id="KW-0678">Repressor</keyword>
<keyword id="KW-0723">Serine/threonine-protein kinase</keyword>
<keyword id="KW-0804">Transcription</keyword>
<keyword id="KW-0805">Transcription regulation</keyword>
<keyword id="KW-0808">Transferase</keyword>
<evidence type="ECO:0000250" key="1"/>
<evidence type="ECO:0000250" key="2">
    <source>
        <dbReference type="UniProtKB" id="P49336"/>
    </source>
</evidence>
<evidence type="ECO:0000255" key="3">
    <source>
        <dbReference type="PROSITE-ProRule" id="PRU00159"/>
    </source>
</evidence>
<evidence type="ECO:0000255" key="4">
    <source>
        <dbReference type="PROSITE-ProRule" id="PRU10027"/>
    </source>
</evidence>
<evidence type="ECO:0000256" key="5">
    <source>
        <dbReference type="SAM" id="MobiDB-lite"/>
    </source>
</evidence>
<evidence type="ECO:0000303" key="6">
    <source>
    </source>
</evidence>
<evidence type="ECO:0000303" key="7">
    <source>
    </source>
</evidence>
<evidence type="ECO:0000305" key="8"/>
<name>CDK8_MOUSE</name>
<proteinExistence type="evidence at protein level"/>
<sequence length="464" mass="53210">MDYDFKVKLSSERERVEDLFEYEGCKVGRGTYGHVYKAKRKDGKDDKDYALKQIEGTGISMSACREIALLRELKHPNVISLLKVFLSHADRKVWLLFDYAEHDLWHIIKFHRASKANKKPVQLPRGMVKSLLYQILDGIHYLHANWVLHRDLKPANILVMGEGPERGRVKIADMGFARLFNSPLKPLADLDPVVVTFWYRAPELLLGARHYTKAIDIWAIGCIFAELLTSEPIFHCRQEDIKTSNPYHHDQLDRIFNVMGFPADKDWEDIKKMPEHSTLMKDFRRNTYTNCSLIKYMEKHKVKPDSKAFHLLQKLLTMDPIKRITSEQAMQDPYFLEDPLPTSDVFAGCQIPYPKREFLTEEEPDEKGDKKTQQQQQGNNHTNGTGHPGNQDSGHAQGPPLKKVRVVPPTTTSGGLIMTSDYQRSNPHAAYPNPGPSTSQPQSSMGYSATSQQPPQYSHQTHRY</sequence>
<comment type="function">
    <text evidence="2">Component of the Mediator complex, a coactivator involved in regulated gene transcription of nearly all RNA polymerase II-dependent genes. Mediator functions as a bridge to convey information from gene-specific regulatory proteins to the basal RNA polymerase II transcription machinery. Mediator is recruited to promoters by direct interactions with regulatory proteins and serves as a scaffold for the assembly of a functional pre-initiation complex with RNA polymerase II and the general transcription factors. Phosphorylates the CTD (C-terminal domain) of the large subunit of RNA polymerase II (RNAp II), which may inhibit the formation of a transcription initiation complex. Phosphorylates CCNH leading to down-regulation of the TFIIH complex and transcriptional repression. Recruited through interaction with MAML1 to hyperphosphorylate the intracellular domain of NOTCH, leading to its degradation (By similarity).</text>
</comment>
<comment type="catalytic activity">
    <reaction>
        <text>L-seryl-[protein] + ATP = O-phospho-L-seryl-[protein] + ADP + H(+)</text>
        <dbReference type="Rhea" id="RHEA:17989"/>
        <dbReference type="Rhea" id="RHEA-COMP:9863"/>
        <dbReference type="Rhea" id="RHEA-COMP:11604"/>
        <dbReference type="ChEBI" id="CHEBI:15378"/>
        <dbReference type="ChEBI" id="CHEBI:29999"/>
        <dbReference type="ChEBI" id="CHEBI:30616"/>
        <dbReference type="ChEBI" id="CHEBI:83421"/>
        <dbReference type="ChEBI" id="CHEBI:456216"/>
        <dbReference type="EC" id="2.7.11.22"/>
    </reaction>
</comment>
<comment type="catalytic activity">
    <reaction>
        <text>L-threonyl-[protein] + ATP = O-phospho-L-threonyl-[protein] + ADP + H(+)</text>
        <dbReference type="Rhea" id="RHEA:46608"/>
        <dbReference type="Rhea" id="RHEA-COMP:11060"/>
        <dbReference type="Rhea" id="RHEA-COMP:11605"/>
        <dbReference type="ChEBI" id="CHEBI:15378"/>
        <dbReference type="ChEBI" id="CHEBI:30013"/>
        <dbReference type="ChEBI" id="CHEBI:30616"/>
        <dbReference type="ChEBI" id="CHEBI:61977"/>
        <dbReference type="ChEBI" id="CHEBI:456216"/>
        <dbReference type="EC" id="2.7.11.22"/>
    </reaction>
</comment>
<comment type="catalytic activity">
    <reaction>
        <text>[DNA-directed RNA polymerase] + ATP = phospho-[DNA-directed RNA polymerase] + ADP + H(+)</text>
        <dbReference type="Rhea" id="RHEA:10216"/>
        <dbReference type="Rhea" id="RHEA-COMP:11321"/>
        <dbReference type="Rhea" id="RHEA-COMP:11322"/>
        <dbReference type="ChEBI" id="CHEBI:15378"/>
        <dbReference type="ChEBI" id="CHEBI:30616"/>
        <dbReference type="ChEBI" id="CHEBI:43176"/>
        <dbReference type="ChEBI" id="CHEBI:68546"/>
        <dbReference type="ChEBI" id="CHEBI:456216"/>
        <dbReference type="EC" id="2.7.11.23"/>
    </reaction>
</comment>
<comment type="cofactor">
    <cofactor evidence="1">
        <name>Mg(2+)</name>
        <dbReference type="ChEBI" id="CHEBI:18420"/>
    </cofactor>
</comment>
<comment type="subunit">
    <text evidence="1">Component of the Mediator complex, which is composed of MED1, MED4, MED6, MED7, MED8, MED9, MED10, MED11, MED12, MED13, MED13L, MED14, MED15, MED16, MED17, MED18, MED19, MED20, MED21, MED22, MED23, MED24, MED25, MED26, MED27, MED29, MED30, MED31, CCNC, CDK8 and CDC2L6/CDK11. The MED12, MED13, CCNC and CDK8 subunits form a distinct module termed the CDK8 module. Mediator containing the CDK8 module is less active than Mediator lacking this module in supporting transcriptional activation. Individual preparations of the Mediator complex lacking one or more distinct subunits have been variously termed ARC, CRSP, DRIP, PC2, SMCC and TRAP. The cylin/CDK pair formed by CCNC/CDK8 also associates with the large subunit of RNA polymerase II. Interacts with CTNNB1, GLI3 and MAML1 (By similarity).</text>
</comment>
<comment type="interaction">
    <interactant intactId="EBI-5745402">
        <id>Q8R3L8</id>
    </interactant>
    <interactant intactId="EBI-5744969">
        <id>A2AGH6</id>
        <label>Med12</label>
    </interactant>
    <organismsDiffer>false</organismsDiffer>
    <experiments>3</experiments>
</comment>
<comment type="subcellular location">
    <subcellularLocation>
        <location evidence="8">Nucleus</location>
    </subcellularLocation>
</comment>
<comment type="alternative products">
    <event type="alternative splicing"/>
    <isoform>
        <id>Q8R3L8-1</id>
        <name>1</name>
        <sequence type="displayed"/>
    </isoform>
    <isoform>
        <id>Q8R3L8-2</id>
        <name>2</name>
        <sequence type="described" ref="VSP_023673 VSP_023674"/>
    </isoform>
    <isoform>
        <id>Q8R3L8-3</id>
        <name>3</name>
        <sequence type="described" ref="VSP_023675"/>
    </isoform>
</comment>
<comment type="similarity">
    <text evidence="8">Belongs to the protein kinase superfamily. CMGC Ser/Thr protein kinase family. CDC2/CDKX subfamily.</text>
</comment>